<dbReference type="EMBL" id="BA000033">
    <property type="protein sequence ID" value="BAB96034.1"/>
    <property type="molecule type" value="Genomic_DNA"/>
</dbReference>
<dbReference type="RefSeq" id="WP_000160212.1">
    <property type="nucleotide sequence ID" value="NC_003923.1"/>
</dbReference>
<dbReference type="PDB" id="8Y36">
    <property type="method" value="EM"/>
    <property type="resolution" value="2.65 A"/>
    <property type="chains" value="D=2-216"/>
</dbReference>
<dbReference type="PDB" id="8Y37">
    <property type="method" value="EM"/>
    <property type="resolution" value="2.53 A"/>
    <property type="chains" value="D=2-216"/>
</dbReference>
<dbReference type="PDB" id="8Y38">
    <property type="method" value="EM"/>
    <property type="resolution" value="2.58 A"/>
    <property type="chains" value="D=2-216"/>
</dbReference>
<dbReference type="PDB" id="8Y39">
    <property type="method" value="EM"/>
    <property type="resolution" value="3.60 A"/>
    <property type="chains" value="D=2-216"/>
</dbReference>
<dbReference type="PDBsum" id="8Y36"/>
<dbReference type="PDBsum" id="8Y37"/>
<dbReference type="PDBsum" id="8Y38"/>
<dbReference type="PDBsum" id="8Y39"/>
<dbReference type="EMDB" id="EMD-38873"/>
<dbReference type="EMDB" id="EMD-38874"/>
<dbReference type="EMDB" id="EMD-38875"/>
<dbReference type="EMDB" id="EMD-38876"/>
<dbReference type="SMR" id="P60450"/>
<dbReference type="GeneID" id="98346562"/>
<dbReference type="KEGG" id="sam:MW2169"/>
<dbReference type="HOGENOM" id="CLU_044142_4_1_9"/>
<dbReference type="GO" id="GO:0022625">
    <property type="term" value="C:cytosolic large ribosomal subunit"/>
    <property type="evidence" value="ECO:0007669"/>
    <property type="project" value="TreeGrafter"/>
</dbReference>
<dbReference type="GO" id="GO:0019843">
    <property type="term" value="F:rRNA binding"/>
    <property type="evidence" value="ECO:0007669"/>
    <property type="project" value="UniProtKB-UniRule"/>
</dbReference>
<dbReference type="GO" id="GO:0003735">
    <property type="term" value="F:structural constituent of ribosome"/>
    <property type="evidence" value="ECO:0007669"/>
    <property type="project" value="InterPro"/>
</dbReference>
<dbReference type="GO" id="GO:0006412">
    <property type="term" value="P:translation"/>
    <property type="evidence" value="ECO:0007669"/>
    <property type="project" value="UniProtKB-UniRule"/>
</dbReference>
<dbReference type="FunFam" id="2.40.30.10:FF:000004">
    <property type="entry name" value="50S ribosomal protein L3"/>
    <property type="match status" value="1"/>
</dbReference>
<dbReference type="FunFam" id="3.30.160.810:FF:000002">
    <property type="entry name" value="50S ribosomal protein L3"/>
    <property type="match status" value="1"/>
</dbReference>
<dbReference type="Gene3D" id="3.30.160.810">
    <property type="match status" value="1"/>
</dbReference>
<dbReference type="Gene3D" id="2.40.30.10">
    <property type="entry name" value="Translation factors"/>
    <property type="match status" value="1"/>
</dbReference>
<dbReference type="HAMAP" id="MF_01325_B">
    <property type="entry name" value="Ribosomal_uL3_B"/>
    <property type="match status" value="1"/>
</dbReference>
<dbReference type="InterPro" id="IPR000597">
    <property type="entry name" value="Ribosomal_uL3"/>
</dbReference>
<dbReference type="InterPro" id="IPR019927">
    <property type="entry name" value="Ribosomal_uL3_bac/org-type"/>
</dbReference>
<dbReference type="InterPro" id="IPR019926">
    <property type="entry name" value="Ribosomal_uL3_CS"/>
</dbReference>
<dbReference type="InterPro" id="IPR009000">
    <property type="entry name" value="Transl_B-barrel_sf"/>
</dbReference>
<dbReference type="NCBIfam" id="TIGR03625">
    <property type="entry name" value="L3_bact"/>
    <property type="match status" value="1"/>
</dbReference>
<dbReference type="PANTHER" id="PTHR11229">
    <property type="entry name" value="50S RIBOSOMAL PROTEIN L3"/>
    <property type="match status" value="1"/>
</dbReference>
<dbReference type="PANTHER" id="PTHR11229:SF16">
    <property type="entry name" value="LARGE RIBOSOMAL SUBUNIT PROTEIN UL3C"/>
    <property type="match status" value="1"/>
</dbReference>
<dbReference type="Pfam" id="PF00297">
    <property type="entry name" value="Ribosomal_L3"/>
    <property type="match status" value="1"/>
</dbReference>
<dbReference type="SUPFAM" id="SSF50447">
    <property type="entry name" value="Translation proteins"/>
    <property type="match status" value="1"/>
</dbReference>
<dbReference type="PROSITE" id="PS00474">
    <property type="entry name" value="RIBOSOMAL_L3"/>
    <property type="match status" value="1"/>
</dbReference>
<protein>
    <recommendedName>
        <fullName evidence="1">Large ribosomal subunit protein uL3</fullName>
    </recommendedName>
    <alternativeName>
        <fullName evidence="3">50S ribosomal protein L3</fullName>
    </alternativeName>
</protein>
<comment type="function">
    <text evidence="1">One of the primary rRNA binding proteins, it binds directly near the 3'-end of the 23S rRNA, where it nucleates assembly of the 50S subunit.</text>
</comment>
<comment type="subunit">
    <text evidence="1">Part of the 50S ribosomal subunit. Forms a cluster with proteins L14 and L19.</text>
</comment>
<comment type="similarity">
    <text evidence="1">Belongs to the universal ribosomal protein uL3 family.</text>
</comment>
<reference key="1">
    <citation type="journal article" date="2002" name="Lancet">
        <title>Genome and virulence determinants of high virulence community-acquired MRSA.</title>
        <authorList>
            <person name="Baba T."/>
            <person name="Takeuchi F."/>
            <person name="Kuroda M."/>
            <person name="Yuzawa H."/>
            <person name="Aoki K."/>
            <person name="Oguchi A."/>
            <person name="Nagai Y."/>
            <person name="Iwama N."/>
            <person name="Asano K."/>
            <person name="Naimi T."/>
            <person name="Kuroda H."/>
            <person name="Cui L."/>
            <person name="Yamamoto K."/>
            <person name="Hiramatsu K."/>
        </authorList>
    </citation>
    <scope>NUCLEOTIDE SEQUENCE [LARGE SCALE GENOMIC DNA]</scope>
    <source>
        <strain>MW2</strain>
    </source>
</reference>
<name>RL3_STAAW</name>
<keyword id="KW-0002">3D-structure</keyword>
<keyword id="KW-0687">Ribonucleoprotein</keyword>
<keyword id="KW-0689">Ribosomal protein</keyword>
<keyword id="KW-0694">RNA-binding</keyword>
<keyword id="KW-0699">rRNA-binding</keyword>
<evidence type="ECO:0000255" key="1">
    <source>
        <dbReference type="HAMAP-Rule" id="MF_01325"/>
    </source>
</evidence>
<evidence type="ECO:0000256" key="2">
    <source>
        <dbReference type="SAM" id="MobiDB-lite"/>
    </source>
</evidence>
<evidence type="ECO:0000305" key="3"/>
<organism>
    <name type="scientific">Staphylococcus aureus (strain MW2)</name>
    <dbReference type="NCBI Taxonomy" id="196620"/>
    <lineage>
        <taxon>Bacteria</taxon>
        <taxon>Bacillati</taxon>
        <taxon>Bacillota</taxon>
        <taxon>Bacilli</taxon>
        <taxon>Bacillales</taxon>
        <taxon>Staphylococcaceae</taxon>
        <taxon>Staphylococcus</taxon>
    </lineage>
</organism>
<feature type="chain" id="PRO_0000077158" description="Large ribosomal subunit protein uL3">
    <location>
        <begin position="1"/>
        <end position="220"/>
    </location>
</feature>
<feature type="region of interest" description="Disordered" evidence="2">
    <location>
        <begin position="130"/>
        <end position="156"/>
    </location>
</feature>
<proteinExistence type="evidence at protein level"/>
<sequence length="220" mass="23718">MTKGILGRKIGMTQVFGENGELIPVTVVEAKENVVLQKKTVEVDGYNAIQVGFEDKKAYKKDAKSNKYANKPAEGHAKKADAAPKRFIREFRNVDVDAYEVGQEVSVDTFVAGDVIDVTGVSKGKGFQGAIKRHGQSRGPMSHGSHFHRAPGSVGMASDASRVFKGQKMPGRMGGNTVTVQNLEVVQVDTENKVILVKGNVPGPKKGLVEIRTSIKKGNK</sequence>
<accession>P60450</accession>
<accession>Q99S21</accession>
<gene>
    <name evidence="1" type="primary">rplC</name>
    <name type="ordered locus">MW2169</name>
</gene>